<evidence type="ECO:0000250" key="1"/>
<evidence type="ECO:0000250" key="2">
    <source>
        <dbReference type="UniProtKB" id="P68137"/>
    </source>
</evidence>
<evidence type="ECO:0000305" key="3"/>
<sequence length="372" mass="41545">MEINVQAIVIDNGSDTCKAGFVGEEAPHSEFPSIVGIDQNDSYVGNEAQSKRGILTLKYPIERGIITNWDDMEKIWHHAFYNELGVAPEENIVVLSESPLNPEENREKMAQIMFETFKTPAIYVENQAVFSIYNSGRMTGIVLDSGDSASHVVPVYEGLALPHATSSLGFAGCDLTDQMSLLLNDLGYNLEREIVRDIKEKLSYVSSDFSWEINDPSTLGKSYELPDGQVITIDKELFACPEVLFLPYAFFGTNLDGIDKAIYNSIMKCNDDIHNDLYGNVVLSGGSTMFPGIEYRMYKGLTQLAPSTTEIVINAEPDRKNSVWIGGSILGLVPNFQELCIDKEDYDEYGPSFVNLVKSFREQNHQNYYGEN</sequence>
<dbReference type="EC" id="3.6.4.-" evidence="2"/>
<dbReference type="EMBL" id="AAFI02000141">
    <property type="protein sequence ID" value="EAL62698.2"/>
    <property type="molecule type" value="Genomic_DNA"/>
</dbReference>
<dbReference type="RefSeq" id="XP_636189.2">
    <property type="nucleotide sequence ID" value="XM_631097.2"/>
</dbReference>
<dbReference type="SMR" id="Q54HE9"/>
<dbReference type="FunCoup" id="Q54HE9">
    <property type="interactions" value="8"/>
</dbReference>
<dbReference type="STRING" id="44689.Q54HE9"/>
<dbReference type="PaxDb" id="44689-DDB0229353"/>
<dbReference type="EnsemblProtists" id="EAL62698">
    <property type="protein sequence ID" value="EAL62698"/>
    <property type="gene ID" value="DDB_G0289533"/>
</dbReference>
<dbReference type="GeneID" id="8627176"/>
<dbReference type="KEGG" id="ddi:DDB_G0289533"/>
<dbReference type="dictyBase" id="DDB_G0289533">
    <property type="gene designation" value="act27"/>
</dbReference>
<dbReference type="VEuPathDB" id="AmoebaDB:DDB_G0289533"/>
<dbReference type="eggNOG" id="KOG0676">
    <property type="taxonomic scope" value="Eukaryota"/>
</dbReference>
<dbReference type="HOGENOM" id="CLU_027965_0_2_1"/>
<dbReference type="InParanoid" id="Q54HE9"/>
<dbReference type="OMA" id="WEINDPS"/>
<dbReference type="PhylomeDB" id="Q54HE9"/>
<dbReference type="PRO" id="PR:Q54HE9"/>
<dbReference type="Proteomes" id="UP000002195">
    <property type="component" value="Chromosome 5"/>
</dbReference>
<dbReference type="GO" id="GO:0015629">
    <property type="term" value="C:actin cytoskeleton"/>
    <property type="evidence" value="ECO:0000250"/>
    <property type="project" value="dictyBase"/>
</dbReference>
<dbReference type="GO" id="GO:0005737">
    <property type="term" value="C:cytoplasm"/>
    <property type="evidence" value="ECO:0007669"/>
    <property type="project" value="UniProtKB-KW"/>
</dbReference>
<dbReference type="GO" id="GO:0005524">
    <property type="term" value="F:ATP binding"/>
    <property type="evidence" value="ECO:0007669"/>
    <property type="project" value="UniProtKB-KW"/>
</dbReference>
<dbReference type="GO" id="GO:0016787">
    <property type="term" value="F:hydrolase activity"/>
    <property type="evidence" value="ECO:0007669"/>
    <property type="project" value="UniProtKB-KW"/>
</dbReference>
<dbReference type="GO" id="GO:0017022">
    <property type="term" value="F:myosin binding"/>
    <property type="evidence" value="ECO:0000250"/>
    <property type="project" value="dictyBase"/>
</dbReference>
<dbReference type="GO" id="GO:0005200">
    <property type="term" value="F:structural constituent of cytoskeleton"/>
    <property type="evidence" value="ECO:0000250"/>
    <property type="project" value="dictyBase"/>
</dbReference>
<dbReference type="GO" id="GO:0006909">
    <property type="term" value="P:phagocytosis"/>
    <property type="evidence" value="ECO:0000250"/>
    <property type="project" value="dictyBase"/>
</dbReference>
<dbReference type="FunFam" id="3.90.640.10:FF:000007">
    <property type="entry name" value="Actin like 7B"/>
    <property type="match status" value="1"/>
</dbReference>
<dbReference type="FunFam" id="3.30.420.40:FF:000148">
    <property type="entry name" value="Actin, alpha skeletal muscle"/>
    <property type="match status" value="1"/>
</dbReference>
<dbReference type="Gene3D" id="3.30.420.40">
    <property type="match status" value="2"/>
</dbReference>
<dbReference type="Gene3D" id="3.90.640.10">
    <property type="entry name" value="Actin, Chain A, domain 4"/>
    <property type="match status" value="1"/>
</dbReference>
<dbReference type="InterPro" id="IPR004000">
    <property type="entry name" value="Actin"/>
</dbReference>
<dbReference type="InterPro" id="IPR043129">
    <property type="entry name" value="ATPase_NBD"/>
</dbReference>
<dbReference type="PANTHER" id="PTHR11937">
    <property type="entry name" value="ACTIN"/>
    <property type="match status" value="1"/>
</dbReference>
<dbReference type="Pfam" id="PF00022">
    <property type="entry name" value="Actin"/>
    <property type="match status" value="2"/>
</dbReference>
<dbReference type="PRINTS" id="PR00190">
    <property type="entry name" value="ACTIN"/>
</dbReference>
<dbReference type="SMART" id="SM00268">
    <property type="entry name" value="ACTIN"/>
    <property type="match status" value="1"/>
</dbReference>
<dbReference type="SUPFAM" id="SSF53067">
    <property type="entry name" value="Actin-like ATPase domain"/>
    <property type="match status" value="2"/>
</dbReference>
<protein>
    <recommendedName>
        <fullName>Putative actin-27</fullName>
        <ecNumber evidence="2">3.6.4.-</ecNumber>
    </recommendedName>
</protein>
<keyword id="KW-0067">ATP-binding</keyword>
<keyword id="KW-0963">Cytoplasm</keyword>
<keyword id="KW-0206">Cytoskeleton</keyword>
<keyword id="KW-0378">Hydrolase</keyword>
<keyword id="KW-0547">Nucleotide-binding</keyword>
<keyword id="KW-1185">Reference proteome</keyword>
<proteinExistence type="inferred from homology"/>
<name>ACT27_DICDI</name>
<comment type="function">
    <text evidence="1">Actins are highly conserved proteins that are involved in various types of cell motility and are ubiquitously expressed in all eukaryotic cells. Multiple isoforms are involved in various cellular functions such as cytoskeleton structure, cell mobility, chromosome movement and muscle contraction (By similarity).</text>
</comment>
<comment type="catalytic activity">
    <reaction evidence="2">
        <text>ATP + H2O = ADP + phosphate + H(+)</text>
        <dbReference type="Rhea" id="RHEA:13065"/>
        <dbReference type="ChEBI" id="CHEBI:15377"/>
        <dbReference type="ChEBI" id="CHEBI:15378"/>
        <dbReference type="ChEBI" id="CHEBI:30616"/>
        <dbReference type="ChEBI" id="CHEBI:43474"/>
        <dbReference type="ChEBI" id="CHEBI:456216"/>
    </reaction>
</comment>
<comment type="subcellular location">
    <subcellularLocation>
        <location evidence="1">Cytoplasm</location>
        <location evidence="1">Cytoskeleton</location>
    </subcellularLocation>
</comment>
<comment type="similarity">
    <text evidence="3">Belongs to the actin family.</text>
</comment>
<feature type="chain" id="PRO_0000312677" description="Putative actin-27">
    <location>
        <begin position="1"/>
        <end position="372"/>
    </location>
</feature>
<accession>Q54HE9</accession>
<organism>
    <name type="scientific">Dictyostelium discoideum</name>
    <name type="common">Social amoeba</name>
    <dbReference type="NCBI Taxonomy" id="44689"/>
    <lineage>
        <taxon>Eukaryota</taxon>
        <taxon>Amoebozoa</taxon>
        <taxon>Evosea</taxon>
        <taxon>Eumycetozoa</taxon>
        <taxon>Dictyostelia</taxon>
        <taxon>Dictyosteliales</taxon>
        <taxon>Dictyosteliaceae</taxon>
        <taxon>Dictyostelium</taxon>
    </lineage>
</organism>
<gene>
    <name type="primary">act27</name>
    <name type="ORF">DDB_G0289533</name>
</gene>
<reference key="1">
    <citation type="journal article" date="2005" name="Nature">
        <title>The genome of the social amoeba Dictyostelium discoideum.</title>
        <authorList>
            <person name="Eichinger L."/>
            <person name="Pachebat J.A."/>
            <person name="Gloeckner G."/>
            <person name="Rajandream M.A."/>
            <person name="Sucgang R."/>
            <person name="Berriman M."/>
            <person name="Song J."/>
            <person name="Olsen R."/>
            <person name="Szafranski K."/>
            <person name="Xu Q."/>
            <person name="Tunggal B."/>
            <person name="Kummerfeld S."/>
            <person name="Madera M."/>
            <person name="Konfortov B.A."/>
            <person name="Rivero F."/>
            <person name="Bankier A.T."/>
            <person name="Lehmann R."/>
            <person name="Hamlin N."/>
            <person name="Davies R."/>
            <person name="Gaudet P."/>
            <person name="Fey P."/>
            <person name="Pilcher K."/>
            <person name="Chen G."/>
            <person name="Saunders D."/>
            <person name="Sodergren E.J."/>
            <person name="Davis P."/>
            <person name="Kerhornou A."/>
            <person name="Nie X."/>
            <person name="Hall N."/>
            <person name="Anjard C."/>
            <person name="Hemphill L."/>
            <person name="Bason N."/>
            <person name="Farbrother P."/>
            <person name="Desany B."/>
            <person name="Just E."/>
            <person name="Morio T."/>
            <person name="Rost R."/>
            <person name="Churcher C.M."/>
            <person name="Cooper J."/>
            <person name="Haydock S."/>
            <person name="van Driessche N."/>
            <person name="Cronin A."/>
            <person name="Goodhead I."/>
            <person name="Muzny D.M."/>
            <person name="Mourier T."/>
            <person name="Pain A."/>
            <person name="Lu M."/>
            <person name="Harper D."/>
            <person name="Lindsay R."/>
            <person name="Hauser H."/>
            <person name="James K.D."/>
            <person name="Quiles M."/>
            <person name="Madan Babu M."/>
            <person name="Saito T."/>
            <person name="Buchrieser C."/>
            <person name="Wardroper A."/>
            <person name="Felder M."/>
            <person name="Thangavelu M."/>
            <person name="Johnson D."/>
            <person name="Knights A."/>
            <person name="Loulseged H."/>
            <person name="Mungall K.L."/>
            <person name="Oliver K."/>
            <person name="Price C."/>
            <person name="Quail M.A."/>
            <person name="Urushihara H."/>
            <person name="Hernandez J."/>
            <person name="Rabbinowitsch E."/>
            <person name="Steffen D."/>
            <person name="Sanders M."/>
            <person name="Ma J."/>
            <person name="Kohara Y."/>
            <person name="Sharp S."/>
            <person name="Simmonds M.N."/>
            <person name="Spiegler S."/>
            <person name="Tivey A."/>
            <person name="Sugano S."/>
            <person name="White B."/>
            <person name="Walker D."/>
            <person name="Woodward J.R."/>
            <person name="Winckler T."/>
            <person name="Tanaka Y."/>
            <person name="Shaulsky G."/>
            <person name="Schleicher M."/>
            <person name="Weinstock G.M."/>
            <person name="Rosenthal A."/>
            <person name="Cox E.C."/>
            <person name="Chisholm R.L."/>
            <person name="Gibbs R.A."/>
            <person name="Loomis W.F."/>
            <person name="Platzer M."/>
            <person name="Kay R.R."/>
            <person name="Williams J.G."/>
            <person name="Dear P.H."/>
            <person name="Noegel A.A."/>
            <person name="Barrell B.G."/>
            <person name="Kuspa A."/>
        </authorList>
    </citation>
    <scope>NUCLEOTIDE SEQUENCE [LARGE SCALE GENOMIC DNA]</scope>
    <source>
        <strain>AX4</strain>
    </source>
</reference>